<accession>P37464</accession>
<dbReference type="EC" id="6.1.1.11" evidence="1"/>
<dbReference type="EMBL" id="D26185">
    <property type="protein sequence ID" value="BAA05249.1"/>
    <property type="molecule type" value="Genomic_DNA"/>
</dbReference>
<dbReference type="EMBL" id="AL009126">
    <property type="protein sequence ID" value="CAB11789.1"/>
    <property type="molecule type" value="Genomic_DNA"/>
</dbReference>
<dbReference type="PIR" id="S66043">
    <property type="entry name" value="S66043"/>
</dbReference>
<dbReference type="RefSeq" id="NP_387894.1">
    <property type="nucleotide sequence ID" value="NC_000964.3"/>
</dbReference>
<dbReference type="RefSeq" id="WP_003247131.1">
    <property type="nucleotide sequence ID" value="NZ_OZ025638.1"/>
</dbReference>
<dbReference type="SMR" id="P37464"/>
<dbReference type="FunCoup" id="P37464">
    <property type="interactions" value="728"/>
</dbReference>
<dbReference type="STRING" id="224308.BSU00130"/>
<dbReference type="jPOST" id="P37464"/>
<dbReference type="PaxDb" id="224308-BSU00130"/>
<dbReference type="EnsemblBacteria" id="CAB11789">
    <property type="protein sequence ID" value="CAB11789"/>
    <property type="gene ID" value="BSU_00130"/>
</dbReference>
<dbReference type="GeneID" id="939994"/>
<dbReference type="KEGG" id="bsu:BSU00130"/>
<dbReference type="PATRIC" id="fig|224308.179.peg.13"/>
<dbReference type="eggNOG" id="COG0172">
    <property type="taxonomic scope" value="Bacteria"/>
</dbReference>
<dbReference type="InParanoid" id="P37464"/>
<dbReference type="OrthoDB" id="9804647at2"/>
<dbReference type="PhylomeDB" id="P37464"/>
<dbReference type="BioCyc" id="BSUB:BSU00130-MONOMER"/>
<dbReference type="UniPathway" id="UPA00906">
    <property type="reaction ID" value="UER00895"/>
</dbReference>
<dbReference type="Proteomes" id="UP000001570">
    <property type="component" value="Chromosome"/>
</dbReference>
<dbReference type="GO" id="GO:0005737">
    <property type="term" value="C:cytoplasm"/>
    <property type="evidence" value="ECO:0007669"/>
    <property type="project" value="UniProtKB-SubCell"/>
</dbReference>
<dbReference type="GO" id="GO:0005524">
    <property type="term" value="F:ATP binding"/>
    <property type="evidence" value="ECO:0007669"/>
    <property type="project" value="UniProtKB-UniRule"/>
</dbReference>
<dbReference type="GO" id="GO:0140096">
    <property type="term" value="F:catalytic activity, acting on a protein"/>
    <property type="evidence" value="ECO:0007669"/>
    <property type="project" value="UniProtKB-ARBA"/>
</dbReference>
<dbReference type="GO" id="GO:0004828">
    <property type="term" value="F:serine-tRNA ligase activity"/>
    <property type="evidence" value="ECO:0007669"/>
    <property type="project" value="UniProtKB-UniRule"/>
</dbReference>
<dbReference type="GO" id="GO:0016740">
    <property type="term" value="F:transferase activity"/>
    <property type="evidence" value="ECO:0007669"/>
    <property type="project" value="UniProtKB-ARBA"/>
</dbReference>
<dbReference type="GO" id="GO:0016260">
    <property type="term" value="P:selenocysteine biosynthetic process"/>
    <property type="evidence" value="ECO:0007669"/>
    <property type="project" value="UniProtKB-UniRule"/>
</dbReference>
<dbReference type="GO" id="GO:0006434">
    <property type="term" value="P:seryl-tRNA aminoacylation"/>
    <property type="evidence" value="ECO:0007669"/>
    <property type="project" value="UniProtKB-UniRule"/>
</dbReference>
<dbReference type="CDD" id="cd00770">
    <property type="entry name" value="SerRS_core"/>
    <property type="match status" value="1"/>
</dbReference>
<dbReference type="Gene3D" id="3.30.930.10">
    <property type="entry name" value="Bira Bifunctional Protein, Domain 2"/>
    <property type="match status" value="1"/>
</dbReference>
<dbReference type="Gene3D" id="1.10.287.40">
    <property type="entry name" value="Serine-tRNA synthetase, tRNA binding domain"/>
    <property type="match status" value="1"/>
</dbReference>
<dbReference type="HAMAP" id="MF_00176">
    <property type="entry name" value="Ser_tRNA_synth_type1"/>
    <property type="match status" value="1"/>
</dbReference>
<dbReference type="InterPro" id="IPR002314">
    <property type="entry name" value="aa-tRNA-synt_IIb"/>
</dbReference>
<dbReference type="InterPro" id="IPR006195">
    <property type="entry name" value="aa-tRNA-synth_II"/>
</dbReference>
<dbReference type="InterPro" id="IPR045864">
    <property type="entry name" value="aa-tRNA-synth_II/BPL/LPL"/>
</dbReference>
<dbReference type="InterPro" id="IPR002317">
    <property type="entry name" value="Ser-tRNA-ligase_type_1"/>
</dbReference>
<dbReference type="InterPro" id="IPR015866">
    <property type="entry name" value="Ser-tRNA-synth_1_N"/>
</dbReference>
<dbReference type="InterPro" id="IPR042103">
    <property type="entry name" value="SerRS_1_N_sf"/>
</dbReference>
<dbReference type="InterPro" id="IPR033729">
    <property type="entry name" value="SerRS_core"/>
</dbReference>
<dbReference type="InterPro" id="IPR010978">
    <property type="entry name" value="tRNA-bd_arm"/>
</dbReference>
<dbReference type="NCBIfam" id="TIGR00414">
    <property type="entry name" value="serS"/>
    <property type="match status" value="1"/>
</dbReference>
<dbReference type="PANTHER" id="PTHR43697:SF1">
    <property type="entry name" value="SERINE--TRNA LIGASE"/>
    <property type="match status" value="1"/>
</dbReference>
<dbReference type="PANTHER" id="PTHR43697">
    <property type="entry name" value="SERYL-TRNA SYNTHETASE"/>
    <property type="match status" value="1"/>
</dbReference>
<dbReference type="Pfam" id="PF02403">
    <property type="entry name" value="Seryl_tRNA_N"/>
    <property type="match status" value="1"/>
</dbReference>
<dbReference type="Pfam" id="PF00587">
    <property type="entry name" value="tRNA-synt_2b"/>
    <property type="match status" value="1"/>
</dbReference>
<dbReference type="PIRSF" id="PIRSF001529">
    <property type="entry name" value="Ser-tRNA-synth_IIa"/>
    <property type="match status" value="1"/>
</dbReference>
<dbReference type="PRINTS" id="PR00981">
    <property type="entry name" value="TRNASYNTHSER"/>
</dbReference>
<dbReference type="SUPFAM" id="SSF55681">
    <property type="entry name" value="Class II aaRS and biotin synthetases"/>
    <property type="match status" value="1"/>
</dbReference>
<dbReference type="SUPFAM" id="SSF46589">
    <property type="entry name" value="tRNA-binding arm"/>
    <property type="match status" value="1"/>
</dbReference>
<dbReference type="PROSITE" id="PS50862">
    <property type="entry name" value="AA_TRNA_LIGASE_II"/>
    <property type="match status" value="1"/>
</dbReference>
<proteinExistence type="inferred from homology"/>
<reference key="1">
    <citation type="journal article" date="1994" name="DNA Res.">
        <title>Systematic sequencing of the 180 kilobase region of the Bacillus subtilis chromosome containing the replication origin.</title>
        <authorList>
            <person name="Ogasawara N."/>
            <person name="Nakai S."/>
            <person name="Yoshikawa H."/>
        </authorList>
    </citation>
    <scope>NUCLEOTIDE SEQUENCE [GENOMIC DNA]</scope>
    <source>
        <strain>168</strain>
    </source>
</reference>
<reference key="2">
    <citation type="journal article" date="1997" name="Nature">
        <title>The complete genome sequence of the Gram-positive bacterium Bacillus subtilis.</title>
        <authorList>
            <person name="Kunst F."/>
            <person name="Ogasawara N."/>
            <person name="Moszer I."/>
            <person name="Albertini A.M."/>
            <person name="Alloni G."/>
            <person name="Azevedo V."/>
            <person name="Bertero M.G."/>
            <person name="Bessieres P."/>
            <person name="Bolotin A."/>
            <person name="Borchert S."/>
            <person name="Borriss R."/>
            <person name="Boursier L."/>
            <person name="Brans A."/>
            <person name="Braun M."/>
            <person name="Brignell S.C."/>
            <person name="Bron S."/>
            <person name="Brouillet S."/>
            <person name="Bruschi C.V."/>
            <person name="Caldwell B."/>
            <person name="Capuano V."/>
            <person name="Carter N.M."/>
            <person name="Choi S.-K."/>
            <person name="Codani J.-J."/>
            <person name="Connerton I.F."/>
            <person name="Cummings N.J."/>
            <person name="Daniel R.A."/>
            <person name="Denizot F."/>
            <person name="Devine K.M."/>
            <person name="Duesterhoeft A."/>
            <person name="Ehrlich S.D."/>
            <person name="Emmerson P.T."/>
            <person name="Entian K.-D."/>
            <person name="Errington J."/>
            <person name="Fabret C."/>
            <person name="Ferrari E."/>
            <person name="Foulger D."/>
            <person name="Fritz C."/>
            <person name="Fujita M."/>
            <person name="Fujita Y."/>
            <person name="Fuma S."/>
            <person name="Galizzi A."/>
            <person name="Galleron N."/>
            <person name="Ghim S.-Y."/>
            <person name="Glaser P."/>
            <person name="Goffeau A."/>
            <person name="Golightly E.J."/>
            <person name="Grandi G."/>
            <person name="Guiseppi G."/>
            <person name="Guy B.J."/>
            <person name="Haga K."/>
            <person name="Haiech J."/>
            <person name="Harwood C.R."/>
            <person name="Henaut A."/>
            <person name="Hilbert H."/>
            <person name="Holsappel S."/>
            <person name="Hosono S."/>
            <person name="Hullo M.-F."/>
            <person name="Itaya M."/>
            <person name="Jones L.-M."/>
            <person name="Joris B."/>
            <person name="Karamata D."/>
            <person name="Kasahara Y."/>
            <person name="Klaerr-Blanchard M."/>
            <person name="Klein C."/>
            <person name="Kobayashi Y."/>
            <person name="Koetter P."/>
            <person name="Koningstein G."/>
            <person name="Krogh S."/>
            <person name="Kumano M."/>
            <person name="Kurita K."/>
            <person name="Lapidus A."/>
            <person name="Lardinois S."/>
            <person name="Lauber J."/>
            <person name="Lazarevic V."/>
            <person name="Lee S.-M."/>
            <person name="Levine A."/>
            <person name="Liu H."/>
            <person name="Masuda S."/>
            <person name="Mauel C."/>
            <person name="Medigue C."/>
            <person name="Medina N."/>
            <person name="Mellado R.P."/>
            <person name="Mizuno M."/>
            <person name="Moestl D."/>
            <person name="Nakai S."/>
            <person name="Noback M."/>
            <person name="Noone D."/>
            <person name="O'Reilly M."/>
            <person name="Ogawa K."/>
            <person name="Ogiwara A."/>
            <person name="Oudega B."/>
            <person name="Park S.-H."/>
            <person name="Parro V."/>
            <person name="Pohl T.M."/>
            <person name="Portetelle D."/>
            <person name="Porwollik S."/>
            <person name="Prescott A.M."/>
            <person name="Presecan E."/>
            <person name="Pujic P."/>
            <person name="Purnelle B."/>
            <person name="Rapoport G."/>
            <person name="Rey M."/>
            <person name="Reynolds S."/>
            <person name="Rieger M."/>
            <person name="Rivolta C."/>
            <person name="Rocha E."/>
            <person name="Roche B."/>
            <person name="Rose M."/>
            <person name="Sadaie Y."/>
            <person name="Sato T."/>
            <person name="Scanlan E."/>
            <person name="Schleich S."/>
            <person name="Schroeter R."/>
            <person name="Scoffone F."/>
            <person name="Sekiguchi J."/>
            <person name="Sekowska A."/>
            <person name="Seror S.J."/>
            <person name="Serror P."/>
            <person name="Shin B.-S."/>
            <person name="Soldo B."/>
            <person name="Sorokin A."/>
            <person name="Tacconi E."/>
            <person name="Takagi T."/>
            <person name="Takahashi H."/>
            <person name="Takemaru K."/>
            <person name="Takeuchi M."/>
            <person name="Tamakoshi A."/>
            <person name="Tanaka T."/>
            <person name="Terpstra P."/>
            <person name="Tognoni A."/>
            <person name="Tosato V."/>
            <person name="Uchiyama S."/>
            <person name="Vandenbol M."/>
            <person name="Vannier F."/>
            <person name="Vassarotti A."/>
            <person name="Viari A."/>
            <person name="Wambutt R."/>
            <person name="Wedler E."/>
            <person name="Wedler H."/>
            <person name="Weitzenegger T."/>
            <person name="Winters P."/>
            <person name="Wipat A."/>
            <person name="Yamamoto H."/>
            <person name="Yamane K."/>
            <person name="Yasumoto K."/>
            <person name="Yata K."/>
            <person name="Yoshida K."/>
            <person name="Yoshikawa H.-F."/>
            <person name="Zumstein E."/>
            <person name="Yoshikawa H."/>
            <person name="Danchin A."/>
        </authorList>
    </citation>
    <scope>NUCLEOTIDE SEQUENCE [LARGE SCALE GENOMIC DNA]</scope>
    <source>
        <strain>168</strain>
    </source>
</reference>
<organism>
    <name type="scientific">Bacillus subtilis (strain 168)</name>
    <dbReference type="NCBI Taxonomy" id="224308"/>
    <lineage>
        <taxon>Bacteria</taxon>
        <taxon>Bacillati</taxon>
        <taxon>Bacillota</taxon>
        <taxon>Bacilli</taxon>
        <taxon>Bacillales</taxon>
        <taxon>Bacillaceae</taxon>
        <taxon>Bacillus</taxon>
    </lineage>
</organism>
<evidence type="ECO:0000255" key="1">
    <source>
        <dbReference type="HAMAP-Rule" id="MF_00176"/>
    </source>
</evidence>
<sequence length="425" mass="48842">MLDTKMLRANFQEIKAKLVHKGEDLTDFDKFEALDDRRRELIGKVEELKGKRNEVSQQVAVLKREKKDADHIIKEMREVGEEIKKLDEELRTVEAELDTILLSIPNIPHESVPVGETEDDNVEVRKWGEKPSFAYEPKPHWDIADELGILDFERAAKVTGSRFVFYKGLGARLERALYNFMLDLHVDEYNYTEVIPPYMVNRASMTGTGQLPKFEEDAFKIREEDYFLIPTAEVPITNMHRDEILSGDSLPINYAAFSACFRSEAGSAGRDTRGLIRQHQFNKVELVKFVKPEDSYEELEKLTNQAERVLQLLELPYRVMSMCTGDLGFTAAKKYDIEVWIPSQDTYREISSCSNFEAFQARRANIRFRREAKGKPEHVHTLNGSGLAVGRTVAAILENYQQEDGSVVIPKVLRPYMGNREVMKP</sequence>
<name>SYS_BACSU</name>
<feature type="chain" id="PRO_0000122005" description="Serine--tRNA ligase">
    <location>
        <begin position="1"/>
        <end position="425"/>
    </location>
</feature>
<feature type="binding site" evidence="1">
    <location>
        <begin position="231"/>
        <end position="233"/>
    </location>
    <ligand>
        <name>L-serine</name>
        <dbReference type="ChEBI" id="CHEBI:33384"/>
    </ligand>
</feature>
<feature type="binding site" evidence="1">
    <location>
        <begin position="262"/>
        <end position="264"/>
    </location>
    <ligand>
        <name>ATP</name>
        <dbReference type="ChEBI" id="CHEBI:30616"/>
    </ligand>
</feature>
<feature type="binding site" evidence="1">
    <location>
        <position position="285"/>
    </location>
    <ligand>
        <name>L-serine</name>
        <dbReference type="ChEBI" id="CHEBI:33384"/>
    </ligand>
</feature>
<feature type="binding site" evidence="1">
    <location>
        <begin position="349"/>
        <end position="352"/>
    </location>
    <ligand>
        <name>ATP</name>
        <dbReference type="ChEBI" id="CHEBI:30616"/>
    </ligand>
</feature>
<feature type="binding site" evidence="1">
    <location>
        <position position="385"/>
    </location>
    <ligand>
        <name>L-serine</name>
        <dbReference type="ChEBI" id="CHEBI:33384"/>
    </ligand>
</feature>
<keyword id="KW-0030">Aminoacyl-tRNA synthetase</keyword>
<keyword id="KW-0067">ATP-binding</keyword>
<keyword id="KW-0963">Cytoplasm</keyword>
<keyword id="KW-0436">Ligase</keyword>
<keyword id="KW-0547">Nucleotide-binding</keyword>
<keyword id="KW-0648">Protein biosynthesis</keyword>
<keyword id="KW-1185">Reference proteome</keyword>
<protein>
    <recommendedName>
        <fullName evidence="1">Serine--tRNA ligase</fullName>
        <ecNumber evidence="1">6.1.1.11</ecNumber>
    </recommendedName>
    <alternativeName>
        <fullName evidence="1">Seryl-tRNA synthetase</fullName>
        <shortName evidence="1">SerRS</shortName>
    </alternativeName>
    <alternativeName>
        <fullName evidence="1">Seryl-tRNA(Ser/Sec) synthetase</fullName>
    </alternativeName>
</protein>
<comment type="function">
    <text evidence="1">Catalyzes the attachment of serine to tRNA(Ser). Is also able to aminoacylate tRNA(Sec) with serine, to form the misacylated tRNA L-seryl-tRNA(Sec), which will be further converted into selenocysteinyl-tRNA(Sec).</text>
</comment>
<comment type="catalytic activity">
    <reaction evidence="1">
        <text>tRNA(Ser) + L-serine + ATP = L-seryl-tRNA(Ser) + AMP + diphosphate + H(+)</text>
        <dbReference type="Rhea" id="RHEA:12292"/>
        <dbReference type="Rhea" id="RHEA-COMP:9669"/>
        <dbReference type="Rhea" id="RHEA-COMP:9703"/>
        <dbReference type="ChEBI" id="CHEBI:15378"/>
        <dbReference type="ChEBI" id="CHEBI:30616"/>
        <dbReference type="ChEBI" id="CHEBI:33019"/>
        <dbReference type="ChEBI" id="CHEBI:33384"/>
        <dbReference type="ChEBI" id="CHEBI:78442"/>
        <dbReference type="ChEBI" id="CHEBI:78533"/>
        <dbReference type="ChEBI" id="CHEBI:456215"/>
        <dbReference type="EC" id="6.1.1.11"/>
    </reaction>
</comment>
<comment type="catalytic activity">
    <reaction evidence="1">
        <text>tRNA(Sec) + L-serine + ATP = L-seryl-tRNA(Sec) + AMP + diphosphate + H(+)</text>
        <dbReference type="Rhea" id="RHEA:42580"/>
        <dbReference type="Rhea" id="RHEA-COMP:9742"/>
        <dbReference type="Rhea" id="RHEA-COMP:10128"/>
        <dbReference type="ChEBI" id="CHEBI:15378"/>
        <dbReference type="ChEBI" id="CHEBI:30616"/>
        <dbReference type="ChEBI" id="CHEBI:33019"/>
        <dbReference type="ChEBI" id="CHEBI:33384"/>
        <dbReference type="ChEBI" id="CHEBI:78442"/>
        <dbReference type="ChEBI" id="CHEBI:78533"/>
        <dbReference type="ChEBI" id="CHEBI:456215"/>
        <dbReference type="EC" id="6.1.1.11"/>
    </reaction>
</comment>
<comment type="pathway">
    <text evidence="1">Aminoacyl-tRNA biosynthesis; selenocysteinyl-tRNA(Sec) biosynthesis; L-seryl-tRNA(Sec) from L-serine and tRNA(Sec): step 1/1.</text>
</comment>
<comment type="subunit">
    <text evidence="1">Homodimer. The tRNA molecule binds across the dimer.</text>
</comment>
<comment type="subcellular location">
    <subcellularLocation>
        <location evidence="1">Cytoplasm</location>
    </subcellularLocation>
</comment>
<comment type="domain">
    <text evidence="1">Consists of two distinct domains, a catalytic core and a N-terminal extension that is involved in tRNA binding.</text>
</comment>
<comment type="similarity">
    <text evidence="1">Belongs to the class-II aminoacyl-tRNA synthetase family. Type-1 seryl-tRNA synthetase subfamily.</text>
</comment>
<gene>
    <name evidence="1" type="primary">serS</name>
    <name type="ordered locus">BSU00130</name>
</gene>